<evidence type="ECO:0000250" key="1"/>
<evidence type="ECO:0000250" key="2">
    <source>
        <dbReference type="UniProtKB" id="P09064"/>
    </source>
</evidence>
<evidence type="ECO:0000250" key="3">
    <source>
        <dbReference type="UniProtKB" id="P56329"/>
    </source>
</evidence>
<evidence type="ECO:0000255" key="4"/>
<evidence type="ECO:0000305" key="5"/>
<accession>P55871</accession>
<keyword id="KW-0963">Cytoplasm</keyword>
<keyword id="KW-0396">Initiation factor</keyword>
<keyword id="KW-0479">Metal-binding</keyword>
<keyword id="KW-0648">Protein biosynthesis</keyword>
<keyword id="KW-0862">Zinc</keyword>
<keyword id="KW-0863">Zinc-finger</keyword>
<name>IF2B_MALDO</name>
<protein>
    <recommendedName>
        <fullName>Eukaryotic translation initiation factor 2 subunit beta</fullName>
        <shortName>eIF2-beta</shortName>
    </recommendedName>
</protein>
<comment type="function">
    <text evidence="1">Component of the eIF2 complex that functions in the early steps of protein synthesis by forming a ternary complex with GTP and initiator tRNA. This complex binds to a 40S ribosomal subunit, followed by mRNA binding to form a 43S pre-initiation complex (43S PIC). Junction of the 60S ribosomal subunit to form the 80S initiation complex is preceded by hydrolysis of the GTP bound to eIF2 and release of an eIF2-GDP binary complex. In order for eIF2 to recycle and catalyze another round of initiation, the GDP bound to eIF2 must exchange with GTP by way of a reaction catalyzed by eIF2B (By similarity).</text>
</comment>
<comment type="subunit">
    <text evidence="2">Eukaryotic translation initiation factor 2 eIF2 is a heterotrimeric complex composed of an alpha, a beta and a gamma subunit.</text>
</comment>
<comment type="subcellular location">
    <subcellularLocation>
        <location evidence="3">Cytoplasm</location>
        <location evidence="3">Cytosol</location>
    </subcellularLocation>
</comment>
<comment type="similarity">
    <text evidence="5">Belongs to the eIF-2-beta/eIF-5 family.</text>
</comment>
<comment type="sequence caution" evidence="5">
    <conflict type="erroneous initiation">
        <sequence resource="EMBL-CDS" id="AAC06384"/>
    </conflict>
</comment>
<sequence>MADDNQNEVKDEVVADIAPFDPTKKKKKKEVVIQDTTDDSVGKLAEKAEACTASEGQESTFAGLKKKKKKPIETSILNEESGDAVEDLNERTGEDEEGEGIVLETPSYPWEGSDRDYTYEELLDRVFTILRENNPDLAGDRRRTVMRPPQVLREGTKKAVFVNFMDLCKTMHRQPDHVMAFLLAELGTSGSLDGQQRLVVKGRFAPKNFEGILRRYVNEYVICLGCQSPDTILSKENRLFFLRCEKCGSGRSVAPNKAGFMARVGRRNAGT</sequence>
<feature type="chain" id="PRO_0000137412" description="Eukaryotic translation initiation factor 2 subunit beta">
    <location>
        <begin position="1"/>
        <end position="271"/>
    </location>
</feature>
<feature type="zinc finger region" description="C4-type" evidence="4">
    <location>
        <begin position="223"/>
        <end position="247"/>
    </location>
</feature>
<proteinExistence type="evidence at transcript level"/>
<organism>
    <name type="scientific">Malus domestica</name>
    <name type="common">Apple</name>
    <name type="synonym">Pyrus malus</name>
    <dbReference type="NCBI Taxonomy" id="3750"/>
    <lineage>
        <taxon>Eukaryota</taxon>
        <taxon>Viridiplantae</taxon>
        <taxon>Streptophyta</taxon>
        <taxon>Embryophyta</taxon>
        <taxon>Tracheophyta</taxon>
        <taxon>Spermatophyta</taxon>
        <taxon>Magnoliopsida</taxon>
        <taxon>eudicotyledons</taxon>
        <taxon>Gunneridae</taxon>
        <taxon>Pentapetalae</taxon>
        <taxon>rosids</taxon>
        <taxon>fabids</taxon>
        <taxon>Rosales</taxon>
        <taxon>Rosaceae</taxon>
        <taxon>Amygdaloideae</taxon>
        <taxon>Maleae</taxon>
        <taxon>Malus</taxon>
    </lineage>
</organism>
<dbReference type="EMBL" id="U80269">
    <property type="protein sequence ID" value="AAC06384.1"/>
    <property type="status" value="ALT_INIT"/>
    <property type="molecule type" value="mRNA"/>
</dbReference>
<dbReference type="SMR" id="P55871"/>
<dbReference type="GO" id="GO:0005829">
    <property type="term" value="C:cytosol"/>
    <property type="evidence" value="ECO:0007669"/>
    <property type="project" value="UniProtKB-SubCell"/>
</dbReference>
<dbReference type="GO" id="GO:0005850">
    <property type="term" value="C:eukaryotic translation initiation factor 2 complex"/>
    <property type="evidence" value="ECO:0000250"/>
    <property type="project" value="UniProtKB"/>
</dbReference>
<dbReference type="GO" id="GO:0003729">
    <property type="term" value="F:mRNA binding"/>
    <property type="evidence" value="ECO:0007669"/>
    <property type="project" value="TreeGrafter"/>
</dbReference>
<dbReference type="GO" id="GO:0003743">
    <property type="term" value="F:translation initiation factor activity"/>
    <property type="evidence" value="ECO:0007669"/>
    <property type="project" value="UniProtKB-KW"/>
</dbReference>
<dbReference type="GO" id="GO:0031369">
    <property type="term" value="F:translation initiation factor binding"/>
    <property type="evidence" value="ECO:0007669"/>
    <property type="project" value="TreeGrafter"/>
</dbReference>
<dbReference type="GO" id="GO:0008270">
    <property type="term" value="F:zinc ion binding"/>
    <property type="evidence" value="ECO:0007669"/>
    <property type="project" value="UniProtKB-KW"/>
</dbReference>
<dbReference type="GO" id="GO:0002183">
    <property type="term" value="P:cytoplasmic translational initiation"/>
    <property type="evidence" value="ECO:0000250"/>
    <property type="project" value="UniProtKB"/>
</dbReference>
<dbReference type="GO" id="GO:0001731">
    <property type="term" value="P:formation of translation preinitiation complex"/>
    <property type="evidence" value="ECO:0007669"/>
    <property type="project" value="TreeGrafter"/>
</dbReference>
<dbReference type="FunFam" id="3.30.30.170:FF:000001">
    <property type="entry name" value="Eukaryotic translation initiation factor 2 subunit"/>
    <property type="match status" value="1"/>
</dbReference>
<dbReference type="Gene3D" id="3.30.30.170">
    <property type="match status" value="1"/>
</dbReference>
<dbReference type="InterPro" id="IPR045196">
    <property type="entry name" value="IF2/IF5"/>
</dbReference>
<dbReference type="InterPro" id="IPR002735">
    <property type="entry name" value="Transl_init_fac_IF2/IF5_dom"/>
</dbReference>
<dbReference type="InterPro" id="IPR016189">
    <property type="entry name" value="Transl_init_fac_IF2/IF5_N"/>
</dbReference>
<dbReference type="InterPro" id="IPR016190">
    <property type="entry name" value="Transl_init_fac_IF2/IF5_Zn-bd"/>
</dbReference>
<dbReference type="PANTHER" id="PTHR23001">
    <property type="entry name" value="EUKARYOTIC TRANSLATION INITIATION FACTOR"/>
    <property type="match status" value="1"/>
</dbReference>
<dbReference type="PANTHER" id="PTHR23001:SF3">
    <property type="entry name" value="EUKARYOTIC TRANSLATION INITIATION FACTOR 2 SUBUNIT 2"/>
    <property type="match status" value="1"/>
</dbReference>
<dbReference type="Pfam" id="PF01873">
    <property type="entry name" value="eIF-5_eIF-2B"/>
    <property type="match status" value="1"/>
</dbReference>
<dbReference type="SMART" id="SM00653">
    <property type="entry name" value="eIF2B_5"/>
    <property type="match status" value="1"/>
</dbReference>
<dbReference type="SUPFAM" id="SSF100966">
    <property type="entry name" value="Translation initiation factor 2 beta, aIF2beta, N-terminal domain"/>
    <property type="match status" value="1"/>
</dbReference>
<dbReference type="SUPFAM" id="SSF75689">
    <property type="entry name" value="Zinc-binding domain of translation initiation factor 2 beta"/>
    <property type="match status" value="1"/>
</dbReference>
<reference key="1">
    <citation type="journal article" date="1997" name="J. Am. Soc. Hortic. Sci.">
        <title>Isolating and characterizing genes differentially expressed early in apple fruit development.</title>
        <authorList>
            <person name="Dong Y.-H."/>
            <person name="Janssen B.-J."/>
            <person name="Bieleski L.L."/>
            <person name="Atkinson R.G."/>
            <person name="Morris B.A."/>
            <person name="Gardner R.C."/>
        </authorList>
    </citation>
    <scope>NUCLEOTIDE SEQUENCE [MRNA]</scope>
    <source>
        <strain>cv. Granny Smith</strain>
    </source>
</reference>